<organism>
    <name type="scientific">Homo sapiens</name>
    <name type="common">Human</name>
    <dbReference type="NCBI Taxonomy" id="9606"/>
    <lineage>
        <taxon>Eukaryota</taxon>
        <taxon>Metazoa</taxon>
        <taxon>Chordata</taxon>
        <taxon>Craniata</taxon>
        <taxon>Vertebrata</taxon>
        <taxon>Euteleostomi</taxon>
        <taxon>Mammalia</taxon>
        <taxon>Eutheria</taxon>
        <taxon>Euarchontoglires</taxon>
        <taxon>Primates</taxon>
        <taxon>Haplorrhini</taxon>
        <taxon>Catarrhini</taxon>
        <taxon>Hominidae</taxon>
        <taxon>Homo</taxon>
    </lineage>
</organism>
<sequence length="4116" mass="470771">MGATGRLELTLAAPPHPGPAFQRSKARETQGEEEGSEMQIAKSDSIHHMSHSQGQPELPPLPASANEEPSGLYQTVMSHSFYPPLMQRTSWTLAAPFKEQHHHRGPSDSIANNYSLMAQDLKLKDLLKVYQPATISVPRDRTGQGLPSSGNRSSSEPMRKKTKFSSRNKEDSTRIKLAFKTSIFSPMKKEVKTSLTFPGSRPMSPEQQLDVMLQQEMEMESKEKKPSESDLERYYYYLTNGIRKDMIAPEEGEVMVRISKLISNTLLTSPFLEPLMVVLVQEKENDYYCSLMKSIVDYILMDPMERKRLFIESIPRLFPQRVIRAPVPWHSVYRSAKKWNEEHLHTVNPMMLRLKELWFAEFRDLRFVRTAEILAGKLPLQPQEFWDVIQKHCLEAHQTLLNKWIPTCAQLFTSRKEHWIHFAPKSNYDSSRNIEEYFASVASFMSLQLRELVIKSLEDLVSLFMIHKDGNDFKEPYQEMKFFIPQLIMIKLEVSEPIIVFNPSFDGCWELIRDSFLEIIKNSNGIPKLKYIPLKFSFTAAAADRQCVKAAEPGEPSMHAAATAMAELKGYNLLLGTVNAEEKLVSDFLIQTFKVFQKNQVGPCKYLNVYKKYVDLLDNTAEQNIAAFLKENHDIDDFVTKINAIKKRRNEIASMNITVPLAMFCLDATALNHDLCERAQNLKDHLIQFQVDVNRDTNTSICNQYSHIADKVSEVPANTKELVSLIEFLKKSSAVTVFKLRRQLRDASERLEFLMDYADLPYQIEDIFDNSRNLLLHKRDQAEMDLIKRCSEFELRLEGYHRELESFRKREVMTTEEMKHNVEKLNELSKNLNRAFAEFELINKEEELLEKEKSTYPLLQAMLKNKVPYEQLWSTAYEFSIKSEEWMNGPLFLLNAEQIAEEIGNMWRTTYKLIKTLSDVPAPRRLAENVKIKIDKFKQYIPILSISCNPGMKDRHWQQISEIVGYEIKPTETTCLSNMLEFGFGKFVEKLEPIGAAASKEYSLEKNLDRMKLDWVNVTFSFVKYRDTDTNILCAIDDIQMLLDDHVIKTQTMCGSPFIKPIEAECRKWEEKLIRIQDNLDAWLKCQATWLYLEPIFSSEDIIAQMPEEGRKFGIVDSYWKSLMSQAVKDNRILVAADQPRMAEKLQEANFLLEDIQKGLNDYLEKKRLFFPRFFFLSNDELLEILSETKDPLRVQPHLKKCFEGIAKLEFTDNLEIVGMISSEKETVPFIQKIYPANAKGMVEKWLQQVEQMMLASMREVIGLGIEAYVKVPRNHWVLQWPGQVVICVSSIFWTQEVSQALAENTLLDFLKKSNDQIAQIVQLVRGKLSSGARLTLGALTVIDVHARDVVAKLSEDRVSDLNDFQWISQLRYYWVAKDVQVQIITTEALYGYEYLGNSPRLVITPLTDRCYRTLMGALKLNLGGAPEGPAGTGKTETTKDLAKALAKQCVVFNCSDGLDYKAMGKFFKGLAQAGAWACFDEFNRIEVEVLSVVAQQILSIQQAIIRKLKTFIFEGTELSLNPTCAVFITMNPGYAGRAELPDNLKALFRTVAMMVPDYALIGEISLYSMGFLDSRSLAQKIVATYRLCSEQLSSQHHYDYGMRAVKSVLTAAGNLKLKYPEENESVLLLRALLDVNLAKFLAQDVPLFQGIISDLFPGVVLPKPDYEVFLKVLNDNIKKMKLQPVPWFIGKIIQIYEMMLVRHGYMIVGDPMGGKTSAYKVLAAALGDLHAANQMEEFAVEYKIINPKAITMGQLYGCFDQVSHEWMDGVLANAFREQASSLSDDRKWIIFDGPVDAIWIENMNTVLDDNKKLCLMSGEIIQMNSKMSLIFEPADLEQASPATVSRCGMIYMEPHQLGWKPLKDSYMDTLPSSLTKEHKELVNDMFMWLVQPCLEFGRLHCKFVVQTSPIHLAFSMMRLYSSLLDEIRAVEEEEMELGEGLSSQQIFLWLQGLFLFSLVWTVAGTINADSRKKFDVFFRNLIMGMDDNHPRPKSVKLTKNNIFPERGSIYDFYFIKQASGHWETWTQYITKEEEKVPAGAKVSELIIPTMETARQSFFLKTYLDHEIPMLFVGPTGTGKSAITNNFLLHLPKNTYLPNCINFSARTSANQTQDIIMSKLDRRRKGLFGPPIGKKAVVFVDDLNMPAKEVYGAQPPIELLRQWIDHGYWFDKKDTTRLDIVDMLLVTAMGPPGGGRNDITGRFTRHLNIISINAFEDDILTKIFSSIVDWHFGKGFDVMFLRYGKMLVQATKTIYRDAVENFLPTPSKSHYVFNLRDFSRVIQGVLLCPHTHLQDVEKCIRLWIHEVYRVFYDRLIDKEDRQVFFNMVKETTSNCFKQTIEKVLIHLSPTGKIVDDNIRSLFFGDYFKPESDQKIYDEITDLKQLTVVMEHYLEEFNNISKAPMSLVMFRFAIEHISRICRVLKQDKGHLLLVGIGGSGRQSAAKLSTFMNAYELYQIEITKNYAGNDWREDLKKIILQVGVATKSTVFLFADNQIKDESFVEDINMLLNTGDVPNIFPADEKADIVEKMQTAARTQGEKVEVTPLSMYNFFIERVINKISFSLAMSPIGDAFRNRLRMFPSLINCCTIDWFQSWPTDALELVANKFLEDVELDDNIRVEVVSMCKYFQESVKKLSLDYYNKLRRHNYVTPTSYLELILTFKTLLNSKRQEVAMMRNRYLTGLQKLDFAASQVAVMQRELTALQPQLILTSEETAKMMVKIEAETREADGKKLLVQADEKEANVAAAIAQGIKNECEGDLAEAMPALEAALAALDTLNPADISLVKSMQNPPGPVKLVMESICIMKGMKPERKPDPSGSGKMIEDYWGVSKKILGDLKFLESLKTYDKDNIPPLTMKRIRERFINHPEFQPAVIKNVSSACEGLCKWVRAMEVYDRVAKVVAPKRERLREAEGKLAAQMQKLNQKRAELKLVVDRLQALNDDFEEMNTKKKDLEENIEICSQKLVRAEKLISGLGGEKDRWTEAARQLGIRYTNLTGDVLLSSGTVAYLGAFTVDYRVQCQNQWLAECKDKVIPGFSDFSLSHTLGDPIKIRAWQIAGLPVDSFSIDNGIIVSNSRRWALMIDPHGQANKWIKNMEKANKLAVIKFSDSNYMRMLENALQLGTPVLIENIGEELDASIEPILLKATFKQQGVEYMRLGENIIEYSRDFKLYITTRLRNPHYLPEVAVKVCLLNFMITPLGLQDQLLGIVAAKEKPELEEKKNQLIVESAKNKKHLKEIEDKILEVLSMSKGNILEDETAIKVLSSSKVLSEEISEKQKVASMTETQIDETRMGYKPVAVHSATIFFCISDLANIEPMYQYSLTWFINLYMHSLTHSTKSEELNLRIKYIIDHFTLSIYNNVCRSLFEKDKLLFSLLLTIGIMKQKKEITEEVWYFLLTGGIALDNPYPNPAPQWLSEKAWAEIVRASALPKLHGLMEHLEQNLGEWKLIYDSAWPHEEQLPGSWKFSQGLEKMVILRCLRPDKMVPAVREFIAEHMGKLYIEAPTFDLQGSYNDSSCCAPLIFVLSPSADPMAGLLKFADDLGMGGTRTQTISLGQGQGPIAAKMINNAIKDGTWVVLQNCHLAASWMPTLEKICEEVIVPESTNARFRLWLTSYPSEKFPVSILQNGIKMTNEPPKGLRANLLRSYLNDPISDPVFFQSCAKAVMWQKMLFGLCFFHAVVQERRNFGPLGWNIPYEFNESDLRISMWQIQMFLNDYKEVPFDALTYLTGECNYGGRVTDDKDRRLLLSLLSMFYCKEIEEDYYSLAPGDTYYIPPHGSYQSYIDYLRNLPITAHPEVFGLHENADITKDNQETNQLFEGVLLTLPRQSGGSGKSPQEVVEELAQDILSKLPRDFDLEEVMKLYPVVYEESMNTVLRQELIRFNRLTKVVRRSLINLGRAIKGQVLMSSELEEVFNSMLVGKVPAMWAAKSYPSLKPLGGYVADLLARLTFFQEWIDKGPPVVFWISGFYFTQSFLTGVSQNYARKYTIPIDHIGFEFEVTPQETVMENNPEDGAYIKGLFLEGARWDRKTMQIGESLPKILYDPLPIIWLKPGESAMFLHQDIYVCPVYKTSARRGTLSTTGHSTNYVLSIELPTDMPQKHWINRGVASLCQLDN</sequence>
<gene>
    <name type="primary">DNAH3</name>
    <name type="synonym">DNAHC3B</name>
</gene>
<keyword id="KW-0002">3D-structure</keyword>
<keyword id="KW-0025">Alternative splicing</keyword>
<keyword id="KW-0067">ATP-binding</keyword>
<keyword id="KW-0966">Cell projection</keyword>
<keyword id="KW-0969">Cilium</keyword>
<keyword id="KW-0175">Coiled coil</keyword>
<keyword id="KW-0963">Cytoplasm</keyword>
<keyword id="KW-0206">Cytoskeleton</keyword>
<keyword id="KW-0243">Dynein</keyword>
<keyword id="KW-0493">Microtubule</keyword>
<keyword id="KW-0505">Motor protein</keyword>
<keyword id="KW-0547">Nucleotide-binding</keyword>
<keyword id="KW-1267">Proteomics identification</keyword>
<keyword id="KW-1185">Reference proteome</keyword>
<protein>
    <recommendedName>
        <fullName>Dynein axonemal heavy chain 3</fullName>
    </recommendedName>
    <alternativeName>
        <fullName>Axonemal beta dynein heavy chain 3</fullName>
        <shortName>HsADHC3</shortName>
    </alternativeName>
    <alternativeName>
        <fullName>Ciliary dynein heavy chain 3</fullName>
    </alternativeName>
    <alternativeName>
        <fullName>Dnahc3-b</fullName>
    </alternativeName>
</protein>
<evidence type="ECO:0000250" key="1"/>
<evidence type="ECO:0000255" key="2"/>
<evidence type="ECO:0000256" key="3">
    <source>
        <dbReference type="SAM" id="MobiDB-lite"/>
    </source>
</evidence>
<evidence type="ECO:0000269" key="4">
    <source>
    </source>
</evidence>
<evidence type="ECO:0000269" key="5">
    <source>
    </source>
</evidence>
<evidence type="ECO:0000303" key="6">
    <source>
    </source>
</evidence>
<evidence type="ECO:0000303" key="7">
    <source>
    </source>
</evidence>
<evidence type="ECO:0000305" key="8"/>
<reference key="1">
    <citation type="submission" date="2002-03" db="EMBL/GenBank/DDBJ databases">
        <title>DNAH3: characterization of the full length gene and mutation search in patients with primary ciliary dyskinesia.</title>
        <authorList>
            <person name="Blouin J.-L."/>
            <person name="Gehrig C."/>
            <person name="Jeganathan D."/>
            <person name="Bartoloni L."/>
            <person name="Rossier C."/>
            <person name="Duriaux Sail G."/>
            <person name="Scamuffa N."/>
            <person name="Mitchison H.M."/>
            <person name="DeLozier Blanchet C.D."/>
            <person name="Antonarakis S.E."/>
        </authorList>
    </citation>
    <scope>NUCLEOTIDE SEQUENCE [MRNA] (ISOFORM 1)</scope>
</reference>
<reference key="2">
    <citation type="journal article" date="2004" name="Nat. Genet.">
        <title>Complete sequencing and characterization of 21,243 full-length human cDNAs.</title>
        <authorList>
            <person name="Ota T."/>
            <person name="Suzuki Y."/>
            <person name="Nishikawa T."/>
            <person name="Otsuki T."/>
            <person name="Sugiyama T."/>
            <person name="Irie R."/>
            <person name="Wakamatsu A."/>
            <person name="Hayashi K."/>
            <person name="Sato H."/>
            <person name="Nagai K."/>
            <person name="Kimura K."/>
            <person name="Makita H."/>
            <person name="Sekine M."/>
            <person name="Obayashi M."/>
            <person name="Nishi T."/>
            <person name="Shibahara T."/>
            <person name="Tanaka T."/>
            <person name="Ishii S."/>
            <person name="Yamamoto J."/>
            <person name="Saito K."/>
            <person name="Kawai Y."/>
            <person name="Isono Y."/>
            <person name="Nakamura Y."/>
            <person name="Nagahari K."/>
            <person name="Murakami K."/>
            <person name="Yasuda T."/>
            <person name="Iwayanagi T."/>
            <person name="Wagatsuma M."/>
            <person name="Shiratori A."/>
            <person name="Sudo H."/>
            <person name="Hosoiri T."/>
            <person name="Kaku Y."/>
            <person name="Kodaira H."/>
            <person name="Kondo H."/>
            <person name="Sugawara M."/>
            <person name="Takahashi M."/>
            <person name="Kanda K."/>
            <person name="Yokoi T."/>
            <person name="Furuya T."/>
            <person name="Kikkawa E."/>
            <person name="Omura Y."/>
            <person name="Abe K."/>
            <person name="Kamihara K."/>
            <person name="Katsuta N."/>
            <person name="Sato K."/>
            <person name="Tanikawa M."/>
            <person name="Yamazaki M."/>
            <person name="Ninomiya K."/>
            <person name="Ishibashi T."/>
            <person name="Yamashita H."/>
            <person name="Murakawa K."/>
            <person name="Fujimori K."/>
            <person name="Tanai H."/>
            <person name="Kimata M."/>
            <person name="Watanabe M."/>
            <person name="Hiraoka S."/>
            <person name="Chiba Y."/>
            <person name="Ishida S."/>
            <person name="Ono Y."/>
            <person name="Takiguchi S."/>
            <person name="Watanabe S."/>
            <person name="Yosida M."/>
            <person name="Hotuta T."/>
            <person name="Kusano J."/>
            <person name="Kanehori K."/>
            <person name="Takahashi-Fujii A."/>
            <person name="Hara H."/>
            <person name="Tanase T.-O."/>
            <person name="Nomura Y."/>
            <person name="Togiya S."/>
            <person name="Komai F."/>
            <person name="Hara R."/>
            <person name="Takeuchi K."/>
            <person name="Arita M."/>
            <person name="Imose N."/>
            <person name="Musashino K."/>
            <person name="Yuuki H."/>
            <person name="Oshima A."/>
            <person name="Sasaki N."/>
            <person name="Aotsuka S."/>
            <person name="Yoshikawa Y."/>
            <person name="Matsunawa H."/>
            <person name="Ichihara T."/>
            <person name="Shiohata N."/>
            <person name="Sano S."/>
            <person name="Moriya S."/>
            <person name="Momiyama H."/>
            <person name="Satoh N."/>
            <person name="Takami S."/>
            <person name="Terashima Y."/>
            <person name="Suzuki O."/>
            <person name="Nakagawa S."/>
            <person name="Senoh A."/>
            <person name="Mizoguchi H."/>
            <person name="Goto Y."/>
            <person name="Shimizu F."/>
            <person name="Wakebe H."/>
            <person name="Hishigaki H."/>
            <person name="Watanabe T."/>
            <person name="Sugiyama A."/>
            <person name="Takemoto M."/>
            <person name="Kawakami B."/>
            <person name="Yamazaki M."/>
            <person name="Watanabe K."/>
            <person name="Kumagai A."/>
            <person name="Itakura S."/>
            <person name="Fukuzumi Y."/>
            <person name="Fujimori Y."/>
            <person name="Komiyama M."/>
            <person name="Tashiro H."/>
            <person name="Tanigami A."/>
            <person name="Fujiwara T."/>
            <person name="Ono T."/>
            <person name="Yamada K."/>
            <person name="Fujii Y."/>
            <person name="Ozaki K."/>
            <person name="Hirao M."/>
            <person name="Ohmori Y."/>
            <person name="Kawabata A."/>
            <person name="Hikiji T."/>
            <person name="Kobatake N."/>
            <person name="Inagaki H."/>
            <person name="Ikema Y."/>
            <person name="Okamoto S."/>
            <person name="Okitani R."/>
            <person name="Kawakami T."/>
            <person name="Noguchi S."/>
            <person name="Itoh T."/>
            <person name="Shigeta K."/>
            <person name="Senba T."/>
            <person name="Matsumura K."/>
            <person name="Nakajima Y."/>
            <person name="Mizuno T."/>
            <person name="Morinaga M."/>
            <person name="Sasaki M."/>
            <person name="Togashi T."/>
            <person name="Oyama M."/>
            <person name="Hata H."/>
            <person name="Watanabe M."/>
            <person name="Komatsu T."/>
            <person name="Mizushima-Sugano J."/>
            <person name="Satoh T."/>
            <person name="Shirai Y."/>
            <person name="Takahashi Y."/>
            <person name="Nakagawa K."/>
            <person name="Okumura K."/>
            <person name="Nagase T."/>
            <person name="Nomura N."/>
            <person name="Kikuchi H."/>
            <person name="Masuho Y."/>
            <person name="Yamashita R."/>
            <person name="Nakai K."/>
            <person name="Yada T."/>
            <person name="Nakamura Y."/>
            <person name="Ohara O."/>
            <person name="Isogai T."/>
            <person name="Sugano S."/>
        </authorList>
    </citation>
    <scope>NUCLEOTIDE SEQUENCE [LARGE SCALE MRNA] (ISOFORM 2)</scope>
</reference>
<reference key="3">
    <citation type="submission" date="2005-07" db="EMBL/GenBank/DDBJ databases">
        <authorList>
            <person name="Mural R.J."/>
            <person name="Istrail S."/>
            <person name="Sutton G.G."/>
            <person name="Florea L."/>
            <person name="Halpern A.L."/>
            <person name="Mobarry C.M."/>
            <person name="Lippert R."/>
            <person name="Walenz B."/>
            <person name="Shatkay H."/>
            <person name="Dew I."/>
            <person name="Miller J.R."/>
            <person name="Flanigan M.J."/>
            <person name="Edwards N.J."/>
            <person name="Bolanos R."/>
            <person name="Fasulo D."/>
            <person name="Halldorsson B.V."/>
            <person name="Hannenhalli S."/>
            <person name="Turner R."/>
            <person name="Yooseph S."/>
            <person name="Lu F."/>
            <person name="Nusskern D.R."/>
            <person name="Shue B.C."/>
            <person name="Zheng X.H."/>
            <person name="Zhong F."/>
            <person name="Delcher A.L."/>
            <person name="Huson D.H."/>
            <person name="Kravitz S.A."/>
            <person name="Mouchard L."/>
            <person name="Reinert K."/>
            <person name="Remington K.A."/>
            <person name="Clark A.G."/>
            <person name="Waterman M.S."/>
            <person name="Eichler E.E."/>
            <person name="Adams M.D."/>
            <person name="Hunkapiller M.W."/>
            <person name="Myers E.W."/>
            <person name="Venter J.C."/>
        </authorList>
    </citation>
    <scope>NUCLEOTIDE SEQUENCE [LARGE SCALE GENOMIC DNA]</scope>
</reference>
<reference key="4">
    <citation type="submission" date="1999-01" db="EMBL/GenBank/DDBJ databases">
        <title>Chromosomal localization of human dynein heavy chain genes.</title>
        <authorList>
            <person name="Maiti A.K."/>
            <person name="Mattei M.-G."/>
            <person name="Jorissen M."/>
            <person name="Volz A."/>
            <person name="Ziegler A."/>
            <person name="Bouvagnet P."/>
        </authorList>
    </citation>
    <scope>NUCLEOTIDE SEQUENCE [MRNA] OF 1391-1533 (ISOFORM 1)</scope>
    <scope>NUCLEOTIDE SEQUENCE [GENOMIC DNA] OF 1435-1449</scope>
    <source>
        <tissue>Nasal polyp</tissue>
    </source>
</reference>
<reference key="5">
    <citation type="journal article" date="1997" name="Gene">
        <title>Identification of dynein heavy chain genes expressed in human and mouse testis: chromosomal localization of an axonemal dynein gene.</title>
        <authorList>
            <person name="Neesen J."/>
            <person name="Koehler M.R."/>
            <person name="Kirschner R."/>
            <person name="Steinlein C."/>
            <person name="Kreutzberger J."/>
            <person name="Engel W."/>
            <person name="Schmid M."/>
        </authorList>
    </citation>
    <scope>NUCLEOTIDE SEQUENCE [MRNA] OF 1429-1605 (ISOFORM 1)</scope>
    <source>
        <tissue>Testis</tissue>
    </source>
</reference>
<reference key="6">
    <citation type="journal article" date="1997" name="FEBS Lett.">
        <title>Isolation of several human axonemal dynein heavy chain genes: genomic structure of the catalytic site, phylogenetic analysis and chromosomal assignment.</title>
        <authorList>
            <person name="Chapelin C."/>
            <person name="Duriez B."/>
            <person name="Magnino F."/>
            <person name="Goossens M."/>
            <person name="Escudier E."/>
            <person name="Amselem S."/>
        </authorList>
    </citation>
    <scope>NUCLEOTIDE SEQUENCE [GENOMIC DNA] OF 1429-1478</scope>
    <scope>TISSUE SPECIFICITY</scope>
</reference>
<reference key="7">
    <citation type="journal article" date="2004" name="Genome Res.">
        <title>The status, quality, and expansion of the NIH full-length cDNA project: the Mammalian Gene Collection (MGC).</title>
        <authorList>
            <consortium name="The MGC Project Team"/>
        </authorList>
    </citation>
    <scope>NUCLEOTIDE SEQUENCE [LARGE SCALE MRNA] OF 1574-4116 (ISOFORM 3)</scope>
    <source>
        <tissue>Ovary</tissue>
    </source>
</reference>
<reference key="8">
    <citation type="journal article" date="2007" name="BMC Genomics">
        <title>The full-ORF clone resource of the German cDNA consortium.</title>
        <authorList>
            <person name="Bechtel S."/>
            <person name="Rosenfelder H."/>
            <person name="Duda A."/>
            <person name="Schmidt C.P."/>
            <person name="Ernst U."/>
            <person name="Wellenreuther R."/>
            <person name="Mehrle A."/>
            <person name="Schuster C."/>
            <person name="Bahr A."/>
            <person name="Bloecker H."/>
            <person name="Heubner D."/>
            <person name="Hoerlein A."/>
            <person name="Michel G."/>
            <person name="Wedler H."/>
            <person name="Koehrer K."/>
            <person name="Ottenwaelder B."/>
            <person name="Poustka A."/>
            <person name="Wiemann S."/>
            <person name="Schupp I."/>
        </authorList>
    </citation>
    <scope>NUCLEOTIDE SEQUENCE [LARGE SCALE MRNA] OF 3152-4116 (ISOFORM 1)</scope>
    <source>
        <tissue>Testis</tissue>
    </source>
</reference>
<reference key="9">
    <citation type="journal article" date="1999" name="Genomics">
        <title>Genome duplications and other features in 12 Mb of DNA sequence from human chromosome 16p and 16q.</title>
        <authorList>
            <person name="Loftus B.J."/>
            <person name="Kim U.-J."/>
            <person name="Sneddon V.P."/>
            <person name="Kalush F."/>
            <person name="Brandon R."/>
            <person name="Fuhrmann J."/>
            <person name="Mason T."/>
            <person name="Crosby M.L."/>
            <person name="Barnstead M."/>
            <person name="Cronin L."/>
            <person name="Mays A.D."/>
            <person name="Cao Y."/>
            <person name="Xu R.X."/>
            <person name="Kang H.-L."/>
            <person name="Mitchell S."/>
            <person name="Eichler E.E."/>
            <person name="Harris P.C."/>
            <person name="Venter J.C."/>
            <person name="Adams M.D."/>
        </authorList>
    </citation>
    <scope>NUCLEOTIDE SEQUENCE [LARGE SCALE GENOMIC DNA] OF 3544-4116</scope>
</reference>
<reference key="10">
    <citation type="journal article" date="2006" name="Science">
        <title>The consensus coding sequences of human breast and colorectal cancers.</title>
        <authorList>
            <person name="Sjoeblom T."/>
            <person name="Jones S."/>
            <person name="Wood L.D."/>
            <person name="Parsons D.W."/>
            <person name="Lin J."/>
            <person name="Barber T.D."/>
            <person name="Mandelker D."/>
            <person name="Leary R.J."/>
            <person name="Ptak J."/>
            <person name="Silliman N."/>
            <person name="Szabo S."/>
            <person name="Buckhaults P."/>
            <person name="Farrell C."/>
            <person name="Meeh P."/>
            <person name="Markowitz S.D."/>
            <person name="Willis J."/>
            <person name="Dawson D."/>
            <person name="Willson J.K.V."/>
            <person name="Gazdar A.F."/>
            <person name="Hartigan J."/>
            <person name="Wu L."/>
            <person name="Liu C."/>
            <person name="Parmigiani G."/>
            <person name="Park B.H."/>
            <person name="Bachman K.E."/>
            <person name="Papadopoulos N."/>
            <person name="Vogelstein B."/>
            <person name="Kinzler K.W."/>
            <person name="Velculescu V.E."/>
        </authorList>
    </citation>
    <scope>VARIANTS [LARGE SCALE ANALYSIS] LEU-484 AND PHE-1608</scope>
</reference>
<accession>Q8TD57</accession>
<accession>O00437</accession>
<accession>O15437</accession>
<accession>O43326</accession>
<accession>Q3C0H2</accession>
<accession>Q8WUP9</accession>
<accession>Q9UEM3</accession>
<accession>Q9UEM5</accession>
<accession>Q9UG35</accession>
<name>DYH3_HUMAN</name>
<proteinExistence type="evidence at protein level"/>
<dbReference type="EMBL" id="AF494040">
    <property type="protein sequence ID" value="AAM12861.1"/>
    <property type="molecule type" value="mRNA"/>
</dbReference>
<dbReference type="EMBL" id="AK056509">
    <property type="protein sequence ID" value="BAE46616.1"/>
    <property type="molecule type" value="mRNA"/>
</dbReference>
<dbReference type="EMBL" id="CH471228">
    <property type="protein sequence ID" value="EAW66851.1"/>
    <property type="molecule type" value="Genomic_DNA"/>
</dbReference>
<dbReference type="EMBL" id="AJ132085">
    <property type="protein sequence ID" value="CAA10558.1"/>
    <property type="molecule type" value="mRNA"/>
</dbReference>
<dbReference type="EMBL" id="AJ132092">
    <property type="protein sequence ID" value="CAA10565.1"/>
    <property type="molecule type" value="Genomic_DNA"/>
</dbReference>
<dbReference type="EMBL" id="Z83805">
    <property type="protein sequence ID" value="CAB06059.1"/>
    <property type="molecule type" value="mRNA"/>
</dbReference>
<dbReference type="EMBL" id="U83574">
    <property type="protein sequence ID" value="AAB82763.1"/>
    <property type="molecule type" value="Genomic_DNA"/>
</dbReference>
<dbReference type="EMBL" id="BC019878">
    <property type="protein sequence ID" value="AAH19878.1"/>
    <property type="molecule type" value="mRNA"/>
</dbReference>
<dbReference type="EMBL" id="AL096732">
    <property type="protein sequence ID" value="CAB46377.1"/>
    <property type="molecule type" value="mRNA"/>
</dbReference>
<dbReference type="EMBL" id="AC002394">
    <property type="protein sequence ID" value="AAC05809.1"/>
    <property type="molecule type" value="Genomic_DNA"/>
</dbReference>
<dbReference type="CCDS" id="CCDS10594.1">
    <molecule id="Q8TD57-1"/>
</dbReference>
<dbReference type="PIR" id="T12545">
    <property type="entry name" value="T12545"/>
</dbReference>
<dbReference type="RefSeq" id="NP_001334815.1">
    <property type="nucleotide sequence ID" value="NM_001347886.1"/>
</dbReference>
<dbReference type="RefSeq" id="NP_001381510.1">
    <molecule id="Q8TD57-2"/>
    <property type="nucleotide sequence ID" value="NM_001394581.1"/>
</dbReference>
<dbReference type="RefSeq" id="NP_060009.1">
    <molecule id="Q8TD57-1"/>
    <property type="nucleotide sequence ID" value="NM_017539.2"/>
</dbReference>
<dbReference type="PDB" id="8J07">
    <property type="method" value="EM"/>
    <property type="resolution" value="4.10 A"/>
    <property type="chains" value="g3=1-4116"/>
</dbReference>
<dbReference type="PDBsum" id="8J07"/>
<dbReference type="EMDB" id="EMD-35888"/>
<dbReference type="SMR" id="Q8TD57"/>
<dbReference type="BioGRID" id="120722">
    <property type="interactions" value="12"/>
</dbReference>
<dbReference type="FunCoup" id="Q8TD57">
    <property type="interactions" value="58"/>
</dbReference>
<dbReference type="IntAct" id="Q8TD57">
    <property type="interactions" value="7"/>
</dbReference>
<dbReference type="MINT" id="Q8TD57"/>
<dbReference type="STRING" id="9606.ENSP00000261383"/>
<dbReference type="CarbonylDB" id="Q8TD57"/>
<dbReference type="GlyCosmos" id="Q8TD57">
    <property type="glycosylation" value="1 site, 1 glycan"/>
</dbReference>
<dbReference type="GlyGen" id="Q8TD57">
    <property type="glycosylation" value="4 sites, 1 O-linked glycan (1 site)"/>
</dbReference>
<dbReference type="iPTMnet" id="Q8TD57"/>
<dbReference type="PhosphoSitePlus" id="Q8TD57"/>
<dbReference type="BioMuta" id="DNAH3"/>
<dbReference type="DMDM" id="74762616"/>
<dbReference type="jPOST" id="Q8TD57"/>
<dbReference type="MassIVE" id="Q8TD57"/>
<dbReference type="PaxDb" id="9606-ENSP00000261383"/>
<dbReference type="PeptideAtlas" id="Q8TD57"/>
<dbReference type="ProteomicsDB" id="74244">
    <molecule id="Q8TD57-1"/>
</dbReference>
<dbReference type="ProteomicsDB" id="74245">
    <molecule id="Q8TD57-2"/>
</dbReference>
<dbReference type="ProteomicsDB" id="74246">
    <molecule id="Q8TD57-3"/>
</dbReference>
<dbReference type="Pumba" id="Q8TD57"/>
<dbReference type="Antibodypedia" id="67049">
    <property type="antibodies" value="26 antibodies from 6 providers"/>
</dbReference>
<dbReference type="DNASU" id="55567"/>
<dbReference type="Ensembl" id="ENST00000261383.3">
    <molecule id="Q8TD57-1"/>
    <property type="protein sequence ID" value="ENSP00000261383.3"/>
    <property type="gene ID" value="ENSG00000158486.15"/>
</dbReference>
<dbReference type="GeneID" id="55567"/>
<dbReference type="KEGG" id="hsa:55567"/>
<dbReference type="UCSC" id="uc010vbe.3">
    <molecule id="Q8TD57-1"/>
    <property type="organism name" value="human"/>
</dbReference>
<dbReference type="AGR" id="HGNC:2949"/>
<dbReference type="CTD" id="55567"/>
<dbReference type="DisGeNET" id="55567"/>
<dbReference type="GeneCards" id="DNAH3"/>
<dbReference type="HGNC" id="HGNC:2949">
    <property type="gene designation" value="DNAH3"/>
</dbReference>
<dbReference type="HPA" id="ENSG00000158486">
    <property type="expression patterns" value="Tissue enhanced (fallopian tube, testis)"/>
</dbReference>
<dbReference type="MalaCards" id="DNAH3"/>
<dbReference type="MIM" id="603334">
    <property type="type" value="gene"/>
</dbReference>
<dbReference type="neXtProt" id="NX_Q8TD57"/>
<dbReference type="OpenTargets" id="ENSG00000158486"/>
<dbReference type="PharmGKB" id="PA27402"/>
<dbReference type="VEuPathDB" id="HostDB:ENSG00000158486"/>
<dbReference type="eggNOG" id="KOG3595">
    <property type="taxonomic scope" value="Eukaryota"/>
</dbReference>
<dbReference type="GeneTree" id="ENSGT00940000154959"/>
<dbReference type="HOGENOM" id="CLU_000038_0_1_1"/>
<dbReference type="InParanoid" id="Q8TD57"/>
<dbReference type="OMA" id="KIWRRIM"/>
<dbReference type="OrthoDB" id="5593012at2759"/>
<dbReference type="PAN-GO" id="Q8TD57">
    <property type="GO annotations" value="5 GO annotations based on evolutionary models"/>
</dbReference>
<dbReference type="PhylomeDB" id="Q8TD57"/>
<dbReference type="TreeFam" id="TF316836"/>
<dbReference type="PathwayCommons" id="Q8TD57"/>
<dbReference type="SignaLink" id="Q8TD57"/>
<dbReference type="BioGRID-ORCS" id="55567">
    <property type="hits" value="9 hits in 1145 CRISPR screens"/>
</dbReference>
<dbReference type="ChiTaRS" id="DNAH3">
    <property type="organism name" value="human"/>
</dbReference>
<dbReference type="GenomeRNAi" id="55567"/>
<dbReference type="Pharos" id="Q8TD57">
    <property type="development level" value="Tdark"/>
</dbReference>
<dbReference type="PRO" id="PR:Q8TD57"/>
<dbReference type="Proteomes" id="UP000005640">
    <property type="component" value="Chromosome 16"/>
</dbReference>
<dbReference type="RNAct" id="Q8TD57">
    <property type="molecule type" value="protein"/>
</dbReference>
<dbReference type="Bgee" id="ENSG00000158486">
    <property type="expression patterns" value="Expressed in bronchial epithelial cell and 129 other cell types or tissues"/>
</dbReference>
<dbReference type="GO" id="GO:0097729">
    <property type="term" value="C:9+2 motile cilium"/>
    <property type="evidence" value="ECO:0000318"/>
    <property type="project" value="GO_Central"/>
</dbReference>
<dbReference type="GO" id="GO:0005858">
    <property type="term" value="C:axonemal dynein complex"/>
    <property type="evidence" value="ECO:0000303"/>
    <property type="project" value="UniProtKB"/>
</dbReference>
<dbReference type="GO" id="GO:0036156">
    <property type="term" value="C:inner dynein arm"/>
    <property type="evidence" value="ECO:0000318"/>
    <property type="project" value="GO_Central"/>
</dbReference>
<dbReference type="GO" id="GO:0005874">
    <property type="term" value="C:microtubule"/>
    <property type="evidence" value="ECO:0007669"/>
    <property type="project" value="UniProtKB-KW"/>
</dbReference>
<dbReference type="GO" id="GO:0005524">
    <property type="term" value="F:ATP binding"/>
    <property type="evidence" value="ECO:0007669"/>
    <property type="project" value="UniProtKB-KW"/>
</dbReference>
<dbReference type="GO" id="GO:0016887">
    <property type="term" value="F:ATP hydrolysis activity"/>
    <property type="evidence" value="ECO:0007669"/>
    <property type="project" value="InterPro"/>
</dbReference>
<dbReference type="GO" id="GO:0045505">
    <property type="term" value="F:dynein intermediate chain binding"/>
    <property type="evidence" value="ECO:0000318"/>
    <property type="project" value="GO_Central"/>
</dbReference>
<dbReference type="GO" id="GO:0051959">
    <property type="term" value="F:dynein light intermediate chain binding"/>
    <property type="evidence" value="ECO:0000318"/>
    <property type="project" value="GO_Central"/>
</dbReference>
<dbReference type="GO" id="GO:0003777">
    <property type="term" value="F:microtubule motor activity"/>
    <property type="evidence" value="ECO:0000303"/>
    <property type="project" value="UniProtKB"/>
</dbReference>
<dbReference type="GO" id="GO:0008569">
    <property type="term" value="F:minus-end-directed microtubule motor activity"/>
    <property type="evidence" value="ECO:0000318"/>
    <property type="project" value="GO_Central"/>
</dbReference>
<dbReference type="GO" id="GO:0060294">
    <property type="term" value="P:cilium movement involved in cell motility"/>
    <property type="evidence" value="ECO:0000318"/>
    <property type="project" value="GO_Central"/>
</dbReference>
<dbReference type="GO" id="GO:0060285">
    <property type="term" value="P:cilium-dependent cell motility"/>
    <property type="evidence" value="ECO:0000303"/>
    <property type="project" value="UniProtKB"/>
</dbReference>
<dbReference type="FunFam" id="1.10.472.130:FF:000008">
    <property type="entry name" value="Dynein axonemal heavy chain 3"/>
    <property type="match status" value="1"/>
</dbReference>
<dbReference type="FunFam" id="1.20.920.30:FF:000002">
    <property type="entry name" value="Dynein axonemal heavy chain 3"/>
    <property type="match status" value="1"/>
</dbReference>
<dbReference type="FunFam" id="1.10.8.1220:FF:000001">
    <property type="entry name" value="Dynein axonemal heavy chain 5"/>
    <property type="match status" value="1"/>
</dbReference>
<dbReference type="FunFam" id="1.10.8.710:FF:000004">
    <property type="entry name" value="Dynein axonemal heavy chain 6"/>
    <property type="match status" value="1"/>
</dbReference>
<dbReference type="FunFam" id="1.20.140.100:FF:000004">
    <property type="entry name" value="Dynein axonemal heavy chain 6"/>
    <property type="match status" value="1"/>
</dbReference>
<dbReference type="FunFam" id="3.40.50.300:FF:002141">
    <property type="entry name" value="Dynein heavy chain"/>
    <property type="match status" value="1"/>
</dbReference>
<dbReference type="FunFam" id="3.20.180.20:FF:000003">
    <property type="entry name" value="Dynein heavy chain 12, axonemal"/>
    <property type="match status" value="1"/>
</dbReference>
<dbReference type="FunFam" id="1.10.287.2620:FF:000002">
    <property type="entry name" value="Dynein heavy chain 2, axonemal"/>
    <property type="match status" value="1"/>
</dbReference>
<dbReference type="FunFam" id="3.40.50.300:FF:000223">
    <property type="entry name" value="Dynein heavy chain 3, axonemal"/>
    <property type="match status" value="1"/>
</dbReference>
<dbReference type="FunFam" id="3.40.50.300:FF:001328">
    <property type="entry name" value="Dynein heavy chain 6, axonemal"/>
    <property type="match status" value="1"/>
</dbReference>
<dbReference type="FunFam" id="3.40.50.300:FF:000063">
    <property type="entry name" value="dynein heavy chain 6, axonemal"/>
    <property type="match status" value="1"/>
</dbReference>
<dbReference type="FunFam" id="1.10.8.720:FF:000001">
    <property type="entry name" value="dynein heavy chain 7, axonemal"/>
    <property type="match status" value="1"/>
</dbReference>
<dbReference type="FunFam" id="1.20.1270.280:FF:000001">
    <property type="entry name" value="dynein heavy chain 7, axonemal"/>
    <property type="match status" value="1"/>
</dbReference>
<dbReference type="FunFam" id="3.10.490.20:FF:000001">
    <property type="entry name" value="dynein heavy chain 7, axonemal"/>
    <property type="match status" value="1"/>
</dbReference>
<dbReference type="FunFam" id="1.20.58.1120:FF:000005">
    <property type="entry name" value="Dynein, axonemal, heavy chain 12"/>
    <property type="match status" value="1"/>
</dbReference>
<dbReference type="FunFam" id="1.20.920.20:FF:000006">
    <property type="entry name" value="Dynein, axonemal, heavy chain 6"/>
    <property type="match status" value="1"/>
</dbReference>
<dbReference type="FunFam" id="3.40.50.300:FF:000362">
    <property type="entry name" value="Dynein, axonemal, heavy chain 6"/>
    <property type="match status" value="1"/>
</dbReference>
<dbReference type="FunFam" id="3.40.50.300:FF:005585">
    <property type="entry name" value="Predicted protein"/>
    <property type="match status" value="1"/>
</dbReference>
<dbReference type="Gene3D" id="1.10.287.2620">
    <property type="match status" value="1"/>
</dbReference>
<dbReference type="Gene3D" id="1.10.472.130">
    <property type="match status" value="1"/>
</dbReference>
<dbReference type="Gene3D" id="1.10.8.1220">
    <property type="match status" value="1"/>
</dbReference>
<dbReference type="Gene3D" id="1.10.8.710">
    <property type="match status" value="1"/>
</dbReference>
<dbReference type="Gene3D" id="1.20.1270.280">
    <property type="match status" value="1"/>
</dbReference>
<dbReference type="Gene3D" id="1.20.58.1120">
    <property type="match status" value="1"/>
</dbReference>
<dbReference type="Gene3D" id="1.20.920.20">
    <property type="match status" value="1"/>
</dbReference>
<dbReference type="Gene3D" id="1.20.920.30">
    <property type="match status" value="1"/>
</dbReference>
<dbReference type="Gene3D" id="3.10.490.20">
    <property type="match status" value="1"/>
</dbReference>
<dbReference type="Gene3D" id="6.10.140.1060">
    <property type="match status" value="1"/>
</dbReference>
<dbReference type="Gene3D" id="1.20.140.100">
    <property type="entry name" value="Dynein heavy chain, N-terminal domain 2"/>
    <property type="match status" value="1"/>
</dbReference>
<dbReference type="Gene3D" id="3.20.180.20">
    <property type="entry name" value="Dynein heavy chain, N-terminal domain 2"/>
    <property type="match status" value="1"/>
</dbReference>
<dbReference type="Gene3D" id="3.40.50.300">
    <property type="entry name" value="P-loop containing nucleotide triphosphate hydrolases"/>
    <property type="match status" value="5"/>
</dbReference>
<dbReference type="Gene3D" id="1.10.8.720">
    <property type="entry name" value="Region D6 of dynein motor"/>
    <property type="match status" value="1"/>
</dbReference>
<dbReference type="InterPro" id="IPR003593">
    <property type="entry name" value="AAA+_ATPase"/>
</dbReference>
<dbReference type="InterPro" id="IPR035699">
    <property type="entry name" value="AAA_6"/>
</dbReference>
<dbReference type="InterPro" id="IPR035706">
    <property type="entry name" value="AAA_9"/>
</dbReference>
<dbReference type="InterPro" id="IPR041658">
    <property type="entry name" value="AAA_lid_11"/>
</dbReference>
<dbReference type="InterPro" id="IPR042219">
    <property type="entry name" value="AAA_lid_11_sf"/>
</dbReference>
<dbReference type="InterPro" id="IPR026983">
    <property type="entry name" value="DHC"/>
</dbReference>
<dbReference type="InterPro" id="IPR041589">
    <property type="entry name" value="DNAH3_AAA_lid_1"/>
</dbReference>
<dbReference type="InterPro" id="IPR042222">
    <property type="entry name" value="Dynein_2_N"/>
</dbReference>
<dbReference type="InterPro" id="IPR043157">
    <property type="entry name" value="Dynein_AAA1S"/>
</dbReference>
<dbReference type="InterPro" id="IPR041466">
    <property type="entry name" value="Dynein_AAA5_ext"/>
</dbReference>
<dbReference type="InterPro" id="IPR041228">
    <property type="entry name" value="Dynein_C"/>
</dbReference>
<dbReference type="InterPro" id="IPR043160">
    <property type="entry name" value="Dynein_C_barrel"/>
</dbReference>
<dbReference type="InterPro" id="IPR024743">
    <property type="entry name" value="Dynein_HC_stalk"/>
</dbReference>
<dbReference type="InterPro" id="IPR024317">
    <property type="entry name" value="Dynein_heavy_chain_D4_dom"/>
</dbReference>
<dbReference type="InterPro" id="IPR004273">
    <property type="entry name" value="Dynein_heavy_D6_P-loop"/>
</dbReference>
<dbReference type="InterPro" id="IPR013602">
    <property type="entry name" value="Dynein_heavy_linker"/>
</dbReference>
<dbReference type="InterPro" id="IPR042228">
    <property type="entry name" value="Dynein_linker_3"/>
</dbReference>
<dbReference type="InterPro" id="IPR027417">
    <property type="entry name" value="P-loop_NTPase"/>
</dbReference>
<dbReference type="PANTHER" id="PTHR22878">
    <property type="entry name" value="DYNEIN HEAVY CHAIN 6, AXONEMAL-LIKE-RELATED"/>
    <property type="match status" value="1"/>
</dbReference>
<dbReference type="PANTHER" id="PTHR22878:SF71">
    <property type="entry name" value="DYNEIN, AXONEMAL, HEAVY CHAIN 3"/>
    <property type="match status" value="1"/>
</dbReference>
<dbReference type="Pfam" id="PF12774">
    <property type="entry name" value="AAA_6"/>
    <property type="match status" value="1"/>
</dbReference>
<dbReference type="Pfam" id="PF12775">
    <property type="entry name" value="AAA_7"/>
    <property type="match status" value="1"/>
</dbReference>
<dbReference type="Pfam" id="PF12780">
    <property type="entry name" value="AAA_8"/>
    <property type="match status" value="1"/>
</dbReference>
<dbReference type="Pfam" id="PF12781">
    <property type="entry name" value="AAA_9"/>
    <property type="match status" value="1"/>
</dbReference>
<dbReference type="Pfam" id="PF17857">
    <property type="entry name" value="AAA_lid_1"/>
    <property type="match status" value="1"/>
</dbReference>
<dbReference type="Pfam" id="PF18198">
    <property type="entry name" value="AAA_lid_11"/>
    <property type="match status" value="1"/>
</dbReference>
<dbReference type="Pfam" id="PF08393">
    <property type="entry name" value="DHC_N2"/>
    <property type="match status" value="1"/>
</dbReference>
<dbReference type="Pfam" id="PF17852">
    <property type="entry name" value="Dynein_AAA_lid"/>
    <property type="match status" value="1"/>
</dbReference>
<dbReference type="Pfam" id="PF18199">
    <property type="entry name" value="Dynein_C"/>
    <property type="match status" value="1"/>
</dbReference>
<dbReference type="Pfam" id="PF03028">
    <property type="entry name" value="Dynein_heavy"/>
    <property type="match status" value="1"/>
</dbReference>
<dbReference type="Pfam" id="PF12777">
    <property type="entry name" value="MT"/>
    <property type="match status" value="1"/>
</dbReference>
<dbReference type="SMART" id="SM00382">
    <property type="entry name" value="AAA"/>
    <property type="match status" value="2"/>
</dbReference>
<dbReference type="SUPFAM" id="SSF52540">
    <property type="entry name" value="P-loop containing nucleoside triphosphate hydrolases"/>
    <property type="match status" value="4"/>
</dbReference>
<comment type="function">
    <text evidence="1">Force generating protein of respiratory cilia. Produces force towards the minus ends of microtubules. Dynein has ATPase activity; the force-producing power stroke is thought to occur on release of ADP. Involved in sperm motility; implicated in sperm flagellar assembly (By similarity).</text>
</comment>
<comment type="subunit">
    <text>Consists of at least two heavy chains and a number of intermediate and light chains.</text>
</comment>
<comment type="subcellular location">
    <subcellularLocation>
        <location evidence="8">Cytoplasm</location>
        <location evidence="8">Cytoskeleton</location>
        <location evidence="8">Cilium axoneme</location>
    </subcellularLocation>
</comment>
<comment type="alternative products">
    <event type="alternative splicing"/>
    <isoform>
        <id>Q8TD57-1</id>
        <name>1</name>
        <sequence type="displayed"/>
    </isoform>
    <isoform>
        <id>Q8TD57-2</id>
        <name>2</name>
        <sequence type="described" ref="VSP_031919 VSP_031920 VSP_031921 VSP_031922 VSP_031923"/>
    </isoform>
    <isoform>
        <id>Q8TD57-3</id>
        <name>3</name>
        <sequence type="described" ref="VSP_031924 VSP_031925"/>
    </isoform>
</comment>
<comment type="tissue specificity">
    <text evidence="5">Expressed primarily in trachea and testis, 2 tissues containing axonemal structures. Also expressed in lung.</text>
</comment>
<comment type="domain">
    <text evidence="1">Dynein heavy chains probably consist of an N-terminal stem (which binds cargo and interacts with other dynein components), and the head or motor domain. The motor contains six tandemly-linked AAA domains in the head, which form a ring. A stalk-like structure (formed by two of the coiled coil domains) protrudes between AAA 4 and AAA 5 and terminates in a microtubule-binding site. A seventh domain may also contribute to this ring; it is not clear whether the N-terminus or the C-terminus forms this extra domain. There are four well-conserved and two non-conserved ATPase sites, one per AAA domain. Probably only one of these (within AAA 1) actually hydrolyzes ATP, the others may serve a regulatory function (By similarity).</text>
</comment>
<comment type="similarity">
    <text evidence="8">Belongs to the dynein heavy chain family.</text>
</comment>
<feature type="chain" id="PRO_0000322544" description="Dynein axonemal heavy chain 3">
    <location>
        <begin position="1"/>
        <end position="4116"/>
    </location>
</feature>
<feature type="region of interest" description="Stem" evidence="1">
    <location>
        <begin position="1"/>
        <end position="1390"/>
    </location>
</feature>
<feature type="region of interest" description="Disordered" evidence="3">
    <location>
        <begin position="1"/>
        <end position="68"/>
    </location>
</feature>
<feature type="region of interest" description="Disordered" evidence="3">
    <location>
        <begin position="137"/>
        <end position="172"/>
    </location>
</feature>
<feature type="region of interest" description="AAA 1" evidence="1">
    <location>
        <begin position="1391"/>
        <end position="1612"/>
    </location>
</feature>
<feature type="region of interest" description="AAA 2" evidence="1">
    <location>
        <begin position="1672"/>
        <end position="1903"/>
    </location>
</feature>
<feature type="region of interest" description="AAA 3" evidence="1">
    <location>
        <begin position="2036"/>
        <end position="2284"/>
    </location>
</feature>
<feature type="region of interest" description="AAA 4" evidence="1">
    <location>
        <begin position="2395"/>
        <end position="2646"/>
    </location>
</feature>
<feature type="region of interest" description="Stalk" evidence="1">
    <location>
        <begin position="2661"/>
        <end position="2960"/>
    </location>
</feature>
<feature type="region of interest" description="AAA 5" evidence="1">
    <location>
        <begin position="3045"/>
        <end position="3275"/>
    </location>
</feature>
<feature type="region of interest" description="AAA 6" evidence="1">
    <location>
        <begin position="3488"/>
        <end position="3712"/>
    </location>
</feature>
<feature type="coiled-coil region" evidence="2">
    <location>
        <begin position="785"/>
        <end position="852"/>
    </location>
</feature>
<feature type="compositionally biased region" description="Polar residues" evidence="3">
    <location>
        <begin position="145"/>
        <end position="156"/>
    </location>
</feature>
<feature type="binding site" evidence="2">
    <location>
        <begin position="1429"/>
        <end position="1436"/>
    </location>
    <ligand>
        <name>ATP</name>
        <dbReference type="ChEBI" id="CHEBI:30616"/>
    </ligand>
</feature>
<feature type="binding site" evidence="2">
    <location>
        <begin position="1710"/>
        <end position="1717"/>
    </location>
    <ligand>
        <name>ATP</name>
        <dbReference type="ChEBI" id="CHEBI:30616"/>
    </ligand>
</feature>
<feature type="binding site" evidence="2">
    <location>
        <begin position="2074"/>
        <end position="2081"/>
    </location>
    <ligand>
        <name>ATP</name>
        <dbReference type="ChEBI" id="CHEBI:30616"/>
    </ligand>
</feature>
<feature type="binding site" evidence="2">
    <location>
        <begin position="2434"/>
        <end position="2441"/>
    </location>
    <ligand>
        <name>ATP</name>
        <dbReference type="ChEBI" id="CHEBI:30616"/>
    </ligand>
</feature>
<feature type="splice variant" id="VSP_031919" description="In isoform 2." evidence="6">
    <original>MGATGRLELTLAAPPHPGPAFQRSKARETQGEEEGSEMQ</original>
    <variation>MGDMDCSSQK</variation>
    <location>
        <begin position="1"/>
        <end position="39"/>
    </location>
</feature>
<feature type="splice variant" id="VSP_031920" description="In isoform 2." evidence="6">
    <original>KLKYIPLKFSFTAAAADRQCVKAAEPGEPSMHAAATAMA</original>
    <variation>KVESVLFP</variation>
    <location>
        <begin position="528"/>
        <end position="566"/>
    </location>
</feature>
<feature type="splice variant" id="VSP_031921" description="In isoform 2." evidence="6">
    <original>Y</original>
    <variation>YEDIKLNSTLFLWPD</variation>
    <location>
        <position position="762"/>
    </location>
</feature>
<feature type="splice variant" id="VSP_031922" description="In isoform 2." evidence="6">
    <original>CSEFELRLEG</original>
    <variation>YRESLGLSWK</variation>
    <location>
        <begin position="790"/>
        <end position="799"/>
    </location>
</feature>
<feature type="splice variant" id="VSP_031923" description="In isoform 2." evidence="6">
    <location>
        <begin position="800"/>
        <end position="4116"/>
    </location>
</feature>
<feature type="splice variant" id="VSP_031924" description="In isoform 3." evidence="7">
    <original>VNDMF</original>
    <variation>MKSGQ</variation>
    <location>
        <begin position="1883"/>
        <end position="1887"/>
    </location>
</feature>
<feature type="splice variant" id="VSP_031925" description="In isoform 3." evidence="7">
    <location>
        <begin position="1888"/>
        <end position="4116"/>
    </location>
</feature>
<feature type="sequence variant" id="VAR_039412" description="In a colorectal cancer sample; somatic mutation." evidence="4">
    <original>I</original>
    <variation>L</variation>
    <location>
        <position position="484"/>
    </location>
</feature>
<feature type="sequence variant" id="VAR_039413" description="In dbSNP:rs16970910.">
    <original>R</original>
    <variation>W</variation>
    <location>
        <position position="545"/>
    </location>
</feature>
<feature type="sequence variant" id="VAR_039414" description="In dbSNP:rs330150.">
    <original>I</original>
    <variation>M</variation>
    <location>
        <position position="1565"/>
    </location>
</feature>
<feature type="sequence variant" id="VAR_039415" description="In dbSNP:rs16970832.">
    <original>V</original>
    <variation>I</variation>
    <location>
        <position position="1583"/>
    </location>
</feature>
<feature type="sequence variant" id="VAR_039416" description="In a colorectal cancer sample; somatic mutation." evidence="4">
    <original>S</original>
    <variation>F</variation>
    <location>
        <position position="1608"/>
    </location>
</feature>
<feature type="sequence variant" id="VAR_039417" description="In dbSNP:rs13332291.">
    <original>T</original>
    <variation>M</variation>
    <location>
        <position position="1752"/>
    </location>
</feature>
<feature type="sequence variant" id="VAR_039418" description="In dbSNP:rs34179606.">
    <original>I</original>
    <variation>N</variation>
    <location>
        <position position="2399"/>
    </location>
</feature>
<feature type="sequence variant" id="VAR_039419" description="In dbSNP:rs12929546.">
    <original>I</original>
    <variation>V</variation>
    <location>
        <position position="2804"/>
    </location>
</feature>
<feature type="sequence variant" id="VAR_039420" description="In dbSNP:rs33928718.">
    <original>K</original>
    <variation>T</variation>
    <location>
        <position position="2949"/>
    </location>
</feature>
<feature type="sequence variant" id="VAR_039421" description="In dbSNP:rs3743695.">
    <original>E</original>
    <variation>K</variation>
    <location>
        <position position="3457"/>
    </location>
</feature>
<feature type="sequence variant" id="VAR_039422" description="In dbSNP:rs34771199.">
    <original>L</original>
    <variation>I</variation>
    <location>
        <position position="3639"/>
    </location>
</feature>
<feature type="sequence variant" id="VAR_039423" description="In dbSNP:rs12924551.">
    <original>R</original>
    <variation>C</variation>
    <location>
        <position position="3645"/>
    </location>
</feature>
<feature type="sequence variant" id="VAR_039424" description="In dbSNP:rs2301620.">
    <original>R</original>
    <variation>W</variation>
    <location>
        <position position="3744"/>
    </location>
</feature>
<feature type="sequence conflict" description="In Ref. 4; CAA10558." evidence="8" ref="4">
    <original>Y</original>
    <variation>F</variation>
    <location>
        <position position="1393"/>
    </location>
</feature>
<feature type="sequence conflict" description="In Ref. 5; CAB06059." evidence="8" ref="5">
    <original>D</original>
    <variation>V</variation>
    <location>
        <position position="1441"/>
    </location>
</feature>
<feature type="sequence conflict" description="In Ref. 5; CAB06059." evidence="8" ref="5">
    <original>YGMR</original>
    <variation>FGLH</variation>
    <location>
        <begin position="1601"/>
        <end position="1604"/>
    </location>
</feature>
<feature type="sequence conflict" description="In Ref. 8; CAB46377." evidence="8" ref="8">
    <original>Q</original>
    <variation>M</variation>
    <location>
        <position position="3828"/>
    </location>
</feature>